<name>RECU_SHOC1</name>
<evidence type="ECO:0000255" key="1">
    <source>
        <dbReference type="HAMAP-Rule" id="MF_00130"/>
    </source>
</evidence>
<evidence type="ECO:0000256" key="2">
    <source>
        <dbReference type="SAM" id="MobiDB-lite"/>
    </source>
</evidence>
<gene>
    <name evidence="1" type="primary">recU</name>
    <name type="ordered locus">ABC2054</name>
</gene>
<keyword id="KW-0963">Cytoplasm</keyword>
<keyword id="KW-0227">DNA damage</keyword>
<keyword id="KW-0233">DNA recombination</keyword>
<keyword id="KW-0234">DNA repair</keyword>
<keyword id="KW-0255">Endonuclease</keyword>
<keyword id="KW-0378">Hydrolase</keyword>
<keyword id="KW-0460">Magnesium</keyword>
<keyword id="KW-0479">Metal-binding</keyword>
<keyword id="KW-0540">Nuclease</keyword>
<keyword id="KW-1185">Reference proteome</keyword>
<feature type="chain" id="PRO_1000016722" description="Holliday junction resolvase RecU">
    <location>
        <begin position="1"/>
        <end position="207"/>
    </location>
</feature>
<feature type="region of interest" description="Disordered" evidence="2">
    <location>
        <begin position="1"/>
        <end position="30"/>
    </location>
</feature>
<feature type="binding site" evidence="1">
    <location>
        <position position="87"/>
    </location>
    <ligand>
        <name>Mg(2+)</name>
        <dbReference type="ChEBI" id="CHEBI:18420"/>
    </ligand>
</feature>
<feature type="binding site" evidence="1">
    <location>
        <position position="89"/>
    </location>
    <ligand>
        <name>Mg(2+)</name>
        <dbReference type="ChEBI" id="CHEBI:18420"/>
    </ligand>
</feature>
<feature type="binding site" evidence="1">
    <location>
        <position position="102"/>
    </location>
    <ligand>
        <name>Mg(2+)</name>
        <dbReference type="ChEBI" id="CHEBI:18420"/>
    </ligand>
</feature>
<feature type="binding site" evidence="1">
    <location>
        <position position="121"/>
    </location>
    <ligand>
        <name>Mg(2+)</name>
        <dbReference type="ChEBI" id="CHEBI:18420"/>
    </ligand>
</feature>
<feature type="site" description="Transition state stabilizer" evidence="1">
    <location>
        <position position="104"/>
    </location>
</feature>
<sequence length="207" mass="23863">MPIRYPNGQPYSRSPKQGQAKKPLPADTYSGRGMTLEQDIDEANLYYLSQQRAVVHKKPTPVQIVKVDYPKRSAAVIREAYFKQASTTDYNGVYRGAYIDFEAKETKNKTSFPLKNIHPHQVDHMREVSKHGGICFVLIRFFQSAEVFLLDAKHLIDYYDNQDVRKSIKKTEIERLGHQVKTGLHPPIDYLRTLDAVYFNGDAKERT</sequence>
<proteinExistence type="inferred from homology"/>
<reference key="1">
    <citation type="submission" date="2003-10" db="EMBL/GenBank/DDBJ databases">
        <title>The complete genome sequence of the alkaliphilic Bacillus clausii KSM-K16.</title>
        <authorList>
            <person name="Takaki Y."/>
            <person name="Kageyama Y."/>
            <person name="Shimamura S."/>
            <person name="Suzuki H."/>
            <person name="Nishi S."/>
            <person name="Hatada Y."/>
            <person name="Kawai S."/>
            <person name="Ito S."/>
            <person name="Horikoshi K."/>
        </authorList>
    </citation>
    <scope>NUCLEOTIDE SEQUENCE [LARGE SCALE GENOMIC DNA]</scope>
    <source>
        <strain>KSM-K16</strain>
    </source>
</reference>
<accession>Q5WGB6</accession>
<protein>
    <recommendedName>
        <fullName evidence="1">Holliday junction resolvase RecU</fullName>
        <ecNumber evidence="1">3.1.21.10</ecNumber>
    </recommendedName>
    <alternativeName>
        <fullName evidence="1">Recombination protein U homolog</fullName>
    </alternativeName>
</protein>
<organism>
    <name type="scientific">Shouchella clausii (strain KSM-K16)</name>
    <name type="common">Alkalihalobacillus clausii</name>
    <dbReference type="NCBI Taxonomy" id="66692"/>
    <lineage>
        <taxon>Bacteria</taxon>
        <taxon>Bacillati</taxon>
        <taxon>Bacillota</taxon>
        <taxon>Bacilli</taxon>
        <taxon>Bacillales</taxon>
        <taxon>Bacillaceae</taxon>
        <taxon>Shouchella</taxon>
    </lineage>
</organism>
<comment type="function">
    <text evidence="1">Endonuclease that resolves Holliday junction intermediates in genetic recombination. Cleaves mobile four-strand junctions by introducing symmetrical nicks in paired strands. Promotes annealing of linear ssDNA with homologous dsDNA. Required for DNA repair, homologous recombination and chromosome segregation.</text>
</comment>
<comment type="catalytic activity">
    <reaction evidence="1">
        <text>Endonucleolytic cleavage at a junction such as a reciprocal single-stranded crossover between two homologous DNA duplexes (Holliday junction).</text>
        <dbReference type="EC" id="3.1.21.10"/>
    </reaction>
</comment>
<comment type="cofactor">
    <cofactor evidence="1">
        <name>Mg(2+)</name>
        <dbReference type="ChEBI" id="CHEBI:18420"/>
    </cofactor>
    <text evidence="1">Binds 1 Mg(2+) ion per subunit.</text>
</comment>
<comment type="subcellular location">
    <subcellularLocation>
        <location evidence="1">Cytoplasm</location>
    </subcellularLocation>
</comment>
<comment type="similarity">
    <text evidence="1">Belongs to the RecU family.</text>
</comment>
<dbReference type="EC" id="3.1.21.10" evidence="1"/>
<dbReference type="EMBL" id="AP006627">
    <property type="protein sequence ID" value="BAD64589.1"/>
    <property type="molecule type" value="Genomic_DNA"/>
</dbReference>
<dbReference type="RefSeq" id="WP_011246897.1">
    <property type="nucleotide sequence ID" value="NC_006582.1"/>
</dbReference>
<dbReference type="SMR" id="Q5WGB6"/>
<dbReference type="STRING" id="66692.ABC2054"/>
<dbReference type="KEGG" id="bcl:ABC2054"/>
<dbReference type="eggNOG" id="COG3331">
    <property type="taxonomic scope" value="Bacteria"/>
</dbReference>
<dbReference type="HOGENOM" id="CLU_096340_0_0_9"/>
<dbReference type="OrthoDB" id="9783592at2"/>
<dbReference type="Proteomes" id="UP000001168">
    <property type="component" value="Chromosome"/>
</dbReference>
<dbReference type="GO" id="GO:0005737">
    <property type="term" value="C:cytoplasm"/>
    <property type="evidence" value="ECO:0007669"/>
    <property type="project" value="UniProtKB-SubCell"/>
</dbReference>
<dbReference type="GO" id="GO:0004519">
    <property type="term" value="F:endonuclease activity"/>
    <property type="evidence" value="ECO:0007669"/>
    <property type="project" value="UniProtKB-UniRule"/>
</dbReference>
<dbReference type="GO" id="GO:0000287">
    <property type="term" value="F:magnesium ion binding"/>
    <property type="evidence" value="ECO:0007669"/>
    <property type="project" value="UniProtKB-UniRule"/>
</dbReference>
<dbReference type="GO" id="GO:0003676">
    <property type="term" value="F:nucleic acid binding"/>
    <property type="evidence" value="ECO:0007669"/>
    <property type="project" value="InterPro"/>
</dbReference>
<dbReference type="GO" id="GO:0007059">
    <property type="term" value="P:chromosome segregation"/>
    <property type="evidence" value="ECO:0007669"/>
    <property type="project" value="UniProtKB-UniRule"/>
</dbReference>
<dbReference type="GO" id="GO:0006310">
    <property type="term" value="P:DNA recombination"/>
    <property type="evidence" value="ECO:0007669"/>
    <property type="project" value="UniProtKB-UniRule"/>
</dbReference>
<dbReference type="GO" id="GO:0006281">
    <property type="term" value="P:DNA repair"/>
    <property type="evidence" value="ECO:0007669"/>
    <property type="project" value="UniProtKB-UniRule"/>
</dbReference>
<dbReference type="CDD" id="cd22354">
    <property type="entry name" value="RecU-like"/>
    <property type="match status" value="1"/>
</dbReference>
<dbReference type="Gene3D" id="3.40.1350.10">
    <property type="match status" value="1"/>
</dbReference>
<dbReference type="HAMAP" id="MF_00130">
    <property type="entry name" value="RecU"/>
    <property type="match status" value="1"/>
</dbReference>
<dbReference type="InterPro" id="IPR004612">
    <property type="entry name" value="Resolv_RecU"/>
</dbReference>
<dbReference type="InterPro" id="IPR011335">
    <property type="entry name" value="Restrct_endonuc-II-like"/>
</dbReference>
<dbReference type="InterPro" id="IPR011856">
    <property type="entry name" value="tRNA_endonuc-like_dom_sf"/>
</dbReference>
<dbReference type="NCBIfam" id="NF002584">
    <property type="entry name" value="PRK02234.1-5"/>
    <property type="match status" value="1"/>
</dbReference>
<dbReference type="NCBIfam" id="TIGR00648">
    <property type="entry name" value="recU"/>
    <property type="match status" value="1"/>
</dbReference>
<dbReference type="Pfam" id="PF03838">
    <property type="entry name" value="RecU"/>
    <property type="match status" value="1"/>
</dbReference>
<dbReference type="PIRSF" id="PIRSF037785">
    <property type="entry name" value="RecU"/>
    <property type="match status" value="1"/>
</dbReference>
<dbReference type="SUPFAM" id="SSF52980">
    <property type="entry name" value="Restriction endonuclease-like"/>
    <property type="match status" value="1"/>
</dbReference>